<feature type="chain" id="PRO_0000110672" description="Orotate phosphoribosyltransferase">
    <location>
        <begin position="1"/>
        <end position="216"/>
    </location>
</feature>
<feature type="binding site" evidence="1">
    <location>
        <position position="100"/>
    </location>
    <ligand>
        <name>5-phospho-alpha-D-ribose 1-diphosphate</name>
        <dbReference type="ChEBI" id="CHEBI:58017"/>
        <note>ligand shared between dimeric partners</note>
    </ligand>
</feature>
<feature type="binding site" evidence="1">
    <location>
        <position position="104"/>
    </location>
    <ligand>
        <name>5-phospho-alpha-D-ribose 1-diphosphate</name>
        <dbReference type="ChEBI" id="CHEBI:58017"/>
        <note>ligand shared between dimeric partners</note>
    </ligand>
</feature>
<feature type="binding site" evidence="1">
    <location>
        <position position="106"/>
    </location>
    <ligand>
        <name>5-phospho-alpha-D-ribose 1-diphosphate</name>
        <dbReference type="ChEBI" id="CHEBI:58017"/>
        <note>ligand shared between dimeric partners</note>
    </ligand>
</feature>
<feature type="binding site" description="in other chain" evidence="1">
    <location>
        <begin position="126"/>
        <end position="134"/>
    </location>
    <ligand>
        <name>5-phospho-alpha-D-ribose 1-diphosphate</name>
        <dbReference type="ChEBI" id="CHEBI:58017"/>
        <note>ligand shared between dimeric partners</note>
    </ligand>
</feature>
<feature type="binding site" evidence="1">
    <location>
        <position position="130"/>
    </location>
    <ligand>
        <name>orotate</name>
        <dbReference type="ChEBI" id="CHEBI:30839"/>
    </ligand>
</feature>
<protein>
    <recommendedName>
        <fullName evidence="1">Orotate phosphoribosyltransferase</fullName>
        <shortName evidence="1">OPRT</shortName>
        <shortName evidence="1">OPRTase</shortName>
        <ecNumber evidence="1">2.4.2.10</ecNumber>
    </recommendedName>
</protein>
<keyword id="KW-0328">Glycosyltransferase</keyword>
<keyword id="KW-0460">Magnesium</keyword>
<keyword id="KW-0665">Pyrimidine biosynthesis</keyword>
<keyword id="KW-1185">Reference proteome</keyword>
<keyword id="KW-0808">Transferase</keyword>
<sequence>MGGNQILKQIIAKHLLDIQAVFLRPNEPFTWASGILSPIYCDNRLTLSFPEVRNDVASGISKLVKEHFPEAEMIAGTATAGIPHAALAADHLNLPMCYVRSKPKAHGKGNQIEGAVQEGQKTVVIEDLISTGGSVLEACAALQAAGCEVLGVVSIFTYGLPKAEEAFAKAELPYYSLTDYDTLTEVALENGNIHSDDLKKLQTWKRNPESKDWFKK</sequence>
<name>PYRE_BACSU</name>
<evidence type="ECO:0000255" key="1">
    <source>
        <dbReference type="HAMAP-Rule" id="MF_01208"/>
    </source>
</evidence>
<evidence type="ECO:0000269" key="2">
    <source>
    </source>
</evidence>
<evidence type="ECO:0000303" key="3">
    <source>
    </source>
</evidence>
<accession>P25972</accession>
<dbReference type="EC" id="2.4.2.10" evidence="1"/>
<dbReference type="EMBL" id="M59757">
    <property type="protein sequence ID" value="AAA21274.1"/>
    <property type="molecule type" value="Genomic_DNA"/>
</dbReference>
<dbReference type="EMBL" id="AL009126">
    <property type="protein sequence ID" value="CAB13430.1"/>
    <property type="molecule type" value="Genomic_DNA"/>
</dbReference>
<dbReference type="EMBL" id="AJ000974">
    <property type="protein sequence ID" value="CAA04408.1"/>
    <property type="molecule type" value="Genomic_DNA"/>
</dbReference>
<dbReference type="PIR" id="F69686">
    <property type="entry name" value="F69686"/>
</dbReference>
<dbReference type="RefSeq" id="NP_389439.1">
    <property type="nucleotide sequence ID" value="NC_000964.3"/>
</dbReference>
<dbReference type="RefSeq" id="WP_003232105.1">
    <property type="nucleotide sequence ID" value="NC_000964.3"/>
</dbReference>
<dbReference type="SMR" id="P25972"/>
<dbReference type="FunCoup" id="P25972">
    <property type="interactions" value="292"/>
</dbReference>
<dbReference type="IntAct" id="P25972">
    <property type="interactions" value="1"/>
</dbReference>
<dbReference type="STRING" id="224308.BSU15560"/>
<dbReference type="PaxDb" id="224308-BSU15560"/>
<dbReference type="EnsemblBacteria" id="CAB13430">
    <property type="protein sequence ID" value="CAB13430"/>
    <property type="gene ID" value="BSU_15560"/>
</dbReference>
<dbReference type="GeneID" id="936714"/>
<dbReference type="KEGG" id="bsu:BSU15560"/>
<dbReference type="PATRIC" id="fig|224308.43.peg.1651"/>
<dbReference type="eggNOG" id="COG0461">
    <property type="taxonomic scope" value="Bacteria"/>
</dbReference>
<dbReference type="InParanoid" id="P25972"/>
<dbReference type="OrthoDB" id="9802134at2"/>
<dbReference type="PhylomeDB" id="P25972"/>
<dbReference type="BioCyc" id="BSUB:BSU15560-MONOMER"/>
<dbReference type="BioCyc" id="MetaCyc:BSU15560-MONOMER"/>
<dbReference type="UniPathway" id="UPA00070">
    <property type="reaction ID" value="UER00119"/>
</dbReference>
<dbReference type="Proteomes" id="UP000001570">
    <property type="component" value="Chromosome"/>
</dbReference>
<dbReference type="GO" id="GO:0000287">
    <property type="term" value="F:magnesium ion binding"/>
    <property type="evidence" value="ECO:0007669"/>
    <property type="project" value="UniProtKB-UniRule"/>
</dbReference>
<dbReference type="GO" id="GO:0004588">
    <property type="term" value="F:orotate phosphoribosyltransferase activity"/>
    <property type="evidence" value="ECO:0000318"/>
    <property type="project" value="GO_Central"/>
</dbReference>
<dbReference type="GO" id="GO:0044205">
    <property type="term" value="P:'de novo' UMP biosynthetic process"/>
    <property type="evidence" value="ECO:0007669"/>
    <property type="project" value="UniProtKB-UniRule"/>
</dbReference>
<dbReference type="GO" id="GO:0019856">
    <property type="term" value="P:pyrimidine nucleobase biosynthetic process"/>
    <property type="evidence" value="ECO:0000318"/>
    <property type="project" value="GO_Central"/>
</dbReference>
<dbReference type="GO" id="GO:0006222">
    <property type="term" value="P:UMP biosynthetic process"/>
    <property type="evidence" value="ECO:0000318"/>
    <property type="project" value="GO_Central"/>
</dbReference>
<dbReference type="CDD" id="cd06223">
    <property type="entry name" value="PRTases_typeI"/>
    <property type="match status" value="1"/>
</dbReference>
<dbReference type="Gene3D" id="3.40.50.2020">
    <property type="match status" value="1"/>
</dbReference>
<dbReference type="HAMAP" id="MF_01208">
    <property type="entry name" value="PyrE"/>
    <property type="match status" value="1"/>
</dbReference>
<dbReference type="InterPro" id="IPR023031">
    <property type="entry name" value="OPRT"/>
</dbReference>
<dbReference type="InterPro" id="IPR004467">
    <property type="entry name" value="Or_phspho_trans_dom"/>
</dbReference>
<dbReference type="InterPro" id="IPR000836">
    <property type="entry name" value="PRibTrfase_dom"/>
</dbReference>
<dbReference type="InterPro" id="IPR029057">
    <property type="entry name" value="PRTase-like"/>
</dbReference>
<dbReference type="NCBIfam" id="TIGR00336">
    <property type="entry name" value="pyrE"/>
    <property type="match status" value="1"/>
</dbReference>
<dbReference type="PANTHER" id="PTHR19278">
    <property type="entry name" value="OROTATE PHOSPHORIBOSYLTRANSFERASE"/>
    <property type="match status" value="1"/>
</dbReference>
<dbReference type="PANTHER" id="PTHR19278:SF9">
    <property type="entry name" value="URIDINE 5'-MONOPHOSPHATE SYNTHASE"/>
    <property type="match status" value="1"/>
</dbReference>
<dbReference type="Pfam" id="PF00156">
    <property type="entry name" value="Pribosyltran"/>
    <property type="match status" value="1"/>
</dbReference>
<dbReference type="SUPFAM" id="SSF53271">
    <property type="entry name" value="PRTase-like"/>
    <property type="match status" value="1"/>
</dbReference>
<dbReference type="PROSITE" id="PS00103">
    <property type="entry name" value="PUR_PYR_PR_TRANSFER"/>
    <property type="match status" value="1"/>
</dbReference>
<gene>
    <name evidence="1" type="primary">pyrE</name>
    <name type="synonym">pyrX</name>
    <name type="ordered locus">BSU15560</name>
</gene>
<comment type="function">
    <text evidence="1">Catalyzes the transfer of a ribosyl phosphate group from 5-phosphoribose 1-diphosphate to orotate, leading to the formation of orotidine monophosphate (OMP).</text>
</comment>
<comment type="catalytic activity">
    <reaction evidence="1">
        <text>orotidine 5'-phosphate + diphosphate = orotate + 5-phospho-alpha-D-ribose 1-diphosphate</text>
        <dbReference type="Rhea" id="RHEA:10380"/>
        <dbReference type="ChEBI" id="CHEBI:30839"/>
        <dbReference type="ChEBI" id="CHEBI:33019"/>
        <dbReference type="ChEBI" id="CHEBI:57538"/>
        <dbReference type="ChEBI" id="CHEBI:58017"/>
        <dbReference type="EC" id="2.4.2.10"/>
    </reaction>
</comment>
<comment type="cofactor">
    <cofactor evidence="1">
        <name>Mg(2+)</name>
        <dbReference type="ChEBI" id="CHEBI:18420"/>
    </cofactor>
</comment>
<comment type="pathway">
    <text evidence="1">Pyrimidine metabolism; UMP biosynthesis via de novo pathway; UMP from orotate: step 1/2.</text>
</comment>
<comment type="subunit">
    <text evidence="1 2">Homodimer (By similarity). Interacts with BrxC (PubMed:33722570).</text>
</comment>
<comment type="similarity">
    <text evidence="1">Belongs to the purine/pyrimidine phosphoribosyltransferase family. PyrE subfamily.</text>
</comment>
<reference key="1">
    <citation type="journal article" date="1991" name="J. Biol. Chem.">
        <title>Functional organization and nucleotide sequence of the Bacillus subtilis pyrimidine biosynthetic operon.</title>
        <authorList>
            <person name="Quinn C.L."/>
            <person name="Stephenson B.T."/>
            <person name="Switzer R.L."/>
        </authorList>
    </citation>
    <scope>NUCLEOTIDE SEQUENCE [GENOMIC DNA]</scope>
</reference>
<reference key="2">
    <citation type="journal article" date="1997" name="Nature">
        <title>The complete genome sequence of the Gram-positive bacterium Bacillus subtilis.</title>
        <authorList>
            <person name="Kunst F."/>
            <person name="Ogasawara N."/>
            <person name="Moszer I."/>
            <person name="Albertini A.M."/>
            <person name="Alloni G."/>
            <person name="Azevedo V."/>
            <person name="Bertero M.G."/>
            <person name="Bessieres P."/>
            <person name="Bolotin A."/>
            <person name="Borchert S."/>
            <person name="Borriss R."/>
            <person name="Boursier L."/>
            <person name="Brans A."/>
            <person name="Braun M."/>
            <person name="Brignell S.C."/>
            <person name="Bron S."/>
            <person name="Brouillet S."/>
            <person name="Bruschi C.V."/>
            <person name="Caldwell B."/>
            <person name="Capuano V."/>
            <person name="Carter N.M."/>
            <person name="Choi S.-K."/>
            <person name="Codani J.-J."/>
            <person name="Connerton I.F."/>
            <person name="Cummings N.J."/>
            <person name="Daniel R.A."/>
            <person name="Denizot F."/>
            <person name="Devine K.M."/>
            <person name="Duesterhoeft A."/>
            <person name="Ehrlich S.D."/>
            <person name="Emmerson P.T."/>
            <person name="Entian K.-D."/>
            <person name="Errington J."/>
            <person name="Fabret C."/>
            <person name="Ferrari E."/>
            <person name="Foulger D."/>
            <person name="Fritz C."/>
            <person name="Fujita M."/>
            <person name="Fujita Y."/>
            <person name="Fuma S."/>
            <person name="Galizzi A."/>
            <person name="Galleron N."/>
            <person name="Ghim S.-Y."/>
            <person name="Glaser P."/>
            <person name="Goffeau A."/>
            <person name="Golightly E.J."/>
            <person name="Grandi G."/>
            <person name="Guiseppi G."/>
            <person name="Guy B.J."/>
            <person name="Haga K."/>
            <person name="Haiech J."/>
            <person name="Harwood C.R."/>
            <person name="Henaut A."/>
            <person name="Hilbert H."/>
            <person name="Holsappel S."/>
            <person name="Hosono S."/>
            <person name="Hullo M.-F."/>
            <person name="Itaya M."/>
            <person name="Jones L.-M."/>
            <person name="Joris B."/>
            <person name="Karamata D."/>
            <person name="Kasahara Y."/>
            <person name="Klaerr-Blanchard M."/>
            <person name="Klein C."/>
            <person name="Kobayashi Y."/>
            <person name="Koetter P."/>
            <person name="Koningstein G."/>
            <person name="Krogh S."/>
            <person name="Kumano M."/>
            <person name="Kurita K."/>
            <person name="Lapidus A."/>
            <person name="Lardinois S."/>
            <person name="Lauber J."/>
            <person name="Lazarevic V."/>
            <person name="Lee S.-M."/>
            <person name="Levine A."/>
            <person name="Liu H."/>
            <person name="Masuda S."/>
            <person name="Mauel C."/>
            <person name="Medigue C."/>
            <person name="Medina N."/>
            <person name="Mellado R.P."/>
            <person name="Mizuno M."/>
            <person name="Moestl D."/>
            <person name="Nakai S."/>
            <person name="Noback M."/>
            <person name="Noone D."/>
            <person name="O'Reilly M."/>
            <person name="Ogawa K."/>
            <person name="Ogiwara A."/>
            <person name="Oudega B."/>
            <person name="Park S.-H."/>
            <person name="Parro V."/>
            <person name="Pohl T.M."/>
            <person name="Portetelle D."/>
            <person name="Porwollik S."/>
            <person name="Prescott A.M."/>
            <person name="Presecan E."/>
            <person name="Pujic P."/>
            <person name="Purnelle B."/>
            <person name="Rapoport G."/>
            <person name="Rey M."/>
            <person name="Reynolds S."/>
            <person name="Rieger M."/>
            <person name="Rivolta C."/>
            <person name="Rocha E."/>
            <person name="Roche B."/>
            <person name="Rose M."/>
            <person name="Sadaie Y."/>
            <person name="Sato T."/>
            <person name="Scanlan E."/>
            <person name="Schleich S."/>
            <person name="Schroeter R."/>
            <person name="Scoffone F."/>
            <person name="Sekiguchi J."/>
            <person name="Sekowska A."/>
            <person name="Seror S.J."/>
            <person name="Serror P."/>
            <person name="Shin B.-S."/>
            <person name="Soldo B."/>
            <person name="Sorokin A."/>
            <person name="Tacconi E."/>
            <person name="Takagi T."/>
            <person name="Takahashi H."/>
            <person name="Takemaru K."/>
            <person name="Takeuchi M."/>
            <person name="Tamakoshi A."/>
            <person name="Tanaka T."/>
            <person name="Terpstra P."/>
            <person name="Tognoni A."/>
            <person name="Tosato V."/>
            <person name="Uchiyama S."/>
            <person name="Vandenbol M."/>
            <person name="Vannier F."/>
            <person name="Vassarotti A."/>
            <person name="Viari A."/>
            <person name="Wambutt R."/>
            <person name="Wedler E."/>
            <person name="Wedler H."/>
            <person name="Weitzenegger T."/>
            <person name="Winters P."/>
            <person name="Wipat A."/>
            <person name="Yamamoto H."/>
            <person name="Yamane K."/>
            <person name="Yasumoto K."/>
            <person name="Yata K."/>
            <person name="Yoshida K."/>
            <person name="Yoshikawa H.-F."/>
            <person name="Zumstein E."/>
            <person name="Yoshikawa H."/>
            <person name="Danchin A."/>
        </authorList>
    </citation>
    <scope>NUCLEOTIDE SEQUENCE [LARGE SCALE GENOMIC DNA]</scope>
    <source>
        <strain>168</strain>
    </source>
</reference>
<reference key="3">
    <citation type="journal article" date="1997" name="J. Bacteriol.">
        <title>L-cysteine biosynthesis in Bacillus subtilis: identification, sequencing, and functional characterization of the gene coding for phosphoadenylylsulfate sulfotransferase.</title>
        <authorList>
            <person name="Mansilla M.C."/>
            <person name="de Mendoza D."/>
        </authorList>
    </citation>
    <scope>NUCLEOTIDE SEQUENCE [GENOMIC DNA] OF 138-216</scope>
</reference>
<reference key="4">
    <citation type="submission" date="1997-10" db="EMBL/GenBank/DDBJ databases">
        <title>Cloning and sequencing 8 Kbp of DNA from Bacillus subtilis downstream of the pyr operon.</title>
        <authorList>
            <person name="Foulger D."/>
            <person name="Errington J."/>
        </authorList>
    </citation>
    <scope>NUCLEOTIDE SEQUENCE [GENOMIC DNA] OF 173-216</scope>
    <source>
        <strain>168</strain>
    </source>
</reference>
<reference key="5">
    <citation type="journal article" date="2021" name="Redox Biol.">
        <title>The Bacillus subtilis monothiol bacilliredoxin BrxC (YtxJ) and the Bdr (YpdA) disulfide reductase reduce S-bacillithiolated proteins.</title>
        <authorList>
            <person name="Gaballa A."/>
            <person name="Su T.T."/>
            <person name="Helmann J.D."/>
        </authorList>
    </citation>
    <scope>INTERACTION WITH BRXC</scope>
    <scope>IDENTIFICATION BY MASS SPECTROMETRY</scope>
    <source>
        <strain evidence="3">168 / CU1065</strain>
    </source>
</reference>
<proteinExistence type="evidence at protein level"/>
<organism>
    <name type="scientific">Bacillus subtilis (strain 168)</name>
    <dbReference type="NCBI Taxonomy" id="224308"/>
    <lineage>
        <taxon>Bacteria</taxon>
        <taxon>Bacillati</taxon>
        <taxon>Bacillota</taxon>
        <taxon>Bacilli</taxon>
        <taxon>Bacillales</taxon>
        <taxon>Bacillaceae</taxon>
        <taxon>Bacillus</taxon>
    </lineage>
</organism>